<organism>
    <name type="scientific">Salmonella paratyphi A (strain AKU_12601)</name>
    <dbReference type="NCBI Taxonomy" id="554290"/>
    <lineage>
        <taxon>Bacteria</taxon>
        <taxon>Pseudomonadati</taxon>
        <taxon>Pseudomonadota</taxon>
        <taxon>Gammaproteobacteria</taxon>
        <taxon>Enterobacterales</taxon>
        <taxon>Enterobacteriaceae</taxon>
        <taxon>Salmonella</taxon>
    </lineage>
</organism>
<feature type="chain" id="PRO_0000366172" description="Ribosomal RNA small subunit methyltransferase B">
    <location>
        <begin position="1"/>
        <end position="429"/>
    </location>
</feature>
<feature type="region of interest" description="Disordered" evidence="2">
    <location>
        <begin position="397"/>
        <end position="419"/>
    </location>
</feature>
<feature type="compositionally biased region" description="Polar residues" evidence="2">
    <location>
        <begin position="400"/>
        <end position="412"/>
    </location>
</feature>
<feature type="active site" description="Nucleophile" evidence="1">
    <location>
        <position position="375"/>
    </location>
</feature>
<feature type="binding site" evidence="1">
    <location>
        <begin position="254"/>
        <end position="260"/>
    </location>
    <ligand>
        <name>S-adenosyl-L-methionine</name>
        <dbReference type="ChEBI" id="CHEBI:59789"/>
    </ligand>
</feature>
<feature type="binding site" evidence="1">
    <location>
        <position position="277"/>
    </location>
    <ligand>
        <name>S-adenosyl-L-methionine</name>
        <dbReference type="ChEBI" id="CHEBI:59789"/>
    </ligand>
</feature>
<feature type="binding site" evidence="1">
    <location>
        <position position="303"/>
    </location>
    <ligand>
        <name>S-adenosyl-L-methionine</name>
        <dbReference type="ChEBI" id="CHEBI:59789"/>
    </ligand>
</feature>
<feature type="binding site" evidence="1">
    <location>
        <position position="322"/>
    </location>
    <ligand>
        <name>S-adenosyl-L-methionine</name>
        <dbReference type="ChEBI" id="CHEBI:59789"/>
    </ligand>
</feature>
<dbReference type="EC" id="2.1.1.176" evidence="1"/>
<dbReference type="EMBL" id="FM200053">
    <property type="protein sequence ID" value="CAR61305.1"/>
    <property type="molecule type" value="Genomic_DNA"/>
</dbReference>
<dbReference type="RefSeq" id="WP_000744613.1">
    <property type="nucleotide sequence ID" value="NC_011147.1"/>
</dbReference>
<dbReference type="SMR" id="B5BGV5"/>
<dbReference type="KEGG" id="sek:SSPA3054"/>
<dbReference type="HOGENOM" id="CLU_005316_0_4_6"/>
<dbReference type="Proteomes" id="UP000001869">
    <property type="component" value="Chromosome"/>
</dbReference>
<dbReference type="GO" id="GO:0005829">
    <property type="term" value="C:cytosol"/>
    <property type="evidence" value="ECO:0007669"/>
    <property type="project" value="TreeGrafter"/>
</dbReference>
<dbReference type="GO" id="GO:0003723">
    <property type="term" value="F:RNA binding"/>
    <property type="evidence" value="ECO:0007669"/>
    <property type="project" value="UniProtKB-KW"/>
</dbReference>
<dbReference type="GO" id="GO:0009383">
    <property type="term" value="F:rRNA (cytosine-C5-)-methyltransferase activity"/>
    <property type="evidence" value="ECO:0007669"/>
    <property type="project" value="TreeGrafter"/>
</dbReference>
<dbReference type="GO" id="GO:0006355">
    <property type="term" value="P:regulation of DNA-templated transcription"/>
    <property type="evidence" value="ECO:0007669"/>
    <property type="project" value="InterPro"/>
</dbReference>
<dbReference type="GO" id="GO:0070475">
    <property type="term" value="P:rRNA base methylation"/>
    <property type="evidence" value="ECO:0007669"/>
    <property type="project" value="TreeGrafter"/>
</dbReference>
<dbReference type="CDD" id="cd02440">
    <property type="entry name" value="AdoMet_MTases"/>
    <property type="match status" value="1"/>
</dbReference>
<dbReference type="CDD" id="cd00620">
    <property type="entry name" value="Methyltransferase_Sun"/>
    <property type="match status" value="1"/>
</dbReference>
<dbReference type="FunFam" id="1.10.287.730:FF:000001">
    <property type="entry name" value="Ribosomal RNA small subunit methyltransferase B"/>
    <property type="match status" value="1"/>
</dbReference>
<dbReference type="FunFam" id="1.10.940.10:FF:000002">
    <property type="entry name" value="Ribosomal RNA small subunit methyltransferase B"/>
    <property type="match status" value="1"/>
</dbReference>
<dbReference type="FunFam" id="3.30.70.1170:FF:000002">
    <property type="entry name" value="Ribosomal RNA small subunit methyltransferase B"/>
    <property type="match status" value="1"/>
</dbReference>
<dbReference type="FunFam" id="3.40.50.150:FF:000022">
    <property type="entry name" value="Ribosomal RNA small subunit methyltransferase B"/>
    <property type="match status" value="1"/>
</dbReference>
<dbReference type="Gene3D" id="1.10.287.730">
    <property type="entry name" value="Helix hairpin bin"/>
    <property type="match status" value="1"/>
</dbReference>
<dbReference type="Gene3D" id="1.10.940.10">
    <property type="entry name" value="NusB-like"/>
    <property type="match status" value="1"/>
</dbReference>
<dbReference type="Gene3D" id="3.30.70.1170">
    <property type="entry name" value="Sun protein, domain 3"/>
    <property type="match status" value="1"/>
</dbReference>
<dbReference type="Gene3D" id="3.40.50.150">
    <property type="entry name" value="Vaccinia Virus protein VP39"/>
    <property type="match status" value="1"/>
</dbReference>
<dbReference type="HAMAP" id="MF_01856">
    <property type="entry name" value="16SrRNA_methyltr_B"/>
    <property type="match status" value="1"/>
</dbReference>
<dbReference type="InterPro" id="IPR049560">
    <property type="entry name" value="MeTrfase_RsmB-F_NOP2_cat"/>
</dbReference>
<dbReference type="InterPro" id="IPR001678">
    <property type="entry name" value="MeTrfase_RsmB-F_NOP2_dom"/>
</dbReference>
<dbReference type="InterPro" id="IPR035926">
    <property type="entry name" value="NusB-like_sf"/>
</dbReference>
<dbReference type="InterPro" id="IPR006027">
    <property type="entry name" value="NusB_RsmB_TIM44"/>
</dbReference>
<dbReference type="InterPro" id="IPR023267">
    <property type="entry name" value="RCMT"/>
</dbReference>
<dbReference type="InterPro" id="IPR004573">
    <property type="entry name" value="rRNA_ssu_MeTfrase_B"/>
</dbReference>
<dbReference type="InterPro" id="IPR023541">
    <property type="entry name" value="rRNA_ssu_MeTfrase_B_ent"/>
</dbReference>
<dbReference type="InterPro" id="IPR054728">
    <property type="entry name" value="RsmB-like_ferredoxin"/>
</dbReference>
<dbReference type="InterPro" id="IPR048019">
    <property type="entry name" value="RsmB-like_N"/>
</dbReference>
<dbReference type="InterPro" id="IPR018314">
    <property type="entry name" value="RsmB/NOL1/NOP2-like_CS"/>
</dbReference>
<dbReference type="InterPro" id="IPR029063">
    <property type="entry name" value="SAM-dependent_MTases_sf"/>
</dbReference>
<dbReference type="NCBIfam" id="NF008149">
    <property type="entry name" value="PRK10901.1"/>
    <property type="match status" value="1"/>
</dbReference>
<dbReference type="NCBIfam" id="NF011494">
    <property type="entry name" value="PRK14902.1"/>
    <property type="match status" value="1"/>
</dbReference>
<dbReference type="NCBIfam" id="TIGR00563">
    <property type="entry name" value="rsmB"/>
    <property type="match status" value="1"/>
</dbReference>
<dbReference type="PANTHER" id="PTHR22807:SF61">
    <property type="entry name" value="NOL1_NOP2_SUN FAMILY PROTEIN _ ANTITERMINATION NUSB DOMAIN-CONTAINING PROTEIN"/>
    <property type="match status" value="1"/>
</dbReference>
<dbReference type="PANTHER" id="PTHR22807">
    <property type="entry name" value="NOP2 YEAST -RELATED NOL1/NOP2/FMU SUN DOMAIN-CONTAINING"/>
    <property type="match status" value="1"/>
</dbReference>
<dbReference type="Pfam" id="PF01189">
    <property type="entry name" value="Methyltr_RsmB-F"/>
    <property type="match status" value="1"/>
</dbReference>
<dbReference type="Pfam" id="PF01029">
    <property type="entry name" value="NusB"/>
    <property type="match status" value="1"/>
</dbReference>
<dbReference type="Pfam" id="PF22458">
    <property type="entry name" value="RsmF-B_ferredox"/>
    <property type="match status" value="1"/>
</dbReference>
<dbReference type="PRINTS" id="PR02008">
    <property type="entry name" value="RCMTFAMILY"/>
</dbReference>
<dbReference type="SUPFAM" id="SSF48013">
    <property type="entry name" value="NusB-like"/>
    <property type="match status" value="1"/>
</dbReference>
<dbReference type="SUPFAM" id="SSF53335">
    <property type="entry name" value="S-adenosyl-L-methionine-dependent methyltransferases"/>
    <property type="match status" value="1"/>
</dbReference>
<dbReference type="PROSITE" id="PS01153">
    <property type="entry name" value="NOL1_NOP2_SUN"/>
    <property type="match status" value="1"/>
</dbReference>
<dbReference type="PROSITE" id="PS51686">
    <property type="entry name" value="SAM_MT_RSMB_NOP"/>
    <property type="match status" value="1"/>
</dbReference>
<gene>
    <name evidence="1" type="primary">rsmB</name>
    <name evidence="1" type="synonym">sun</name>
    <name type="ordered locus">SSPA3054</name>
</gene>
<reference key="1">
    <citation type="journal article" date="2009" name="BMC Genomics">
        <title>Pseudogene accumulation in the evolutionary histories of Salmonella enterica serovars Paratyphi A and Typhi.</title>
        <authorList>
            <person name="Holt K.E."/>
            <person name="Thomson N.R."/>
            <person name="Wain J."/>
            <person name="Langridge G.C."/>
            <person name="Hasan R."/>
            <person name="Bhutta Z.A."/>
            <person name="Quail M.A."/>
            <person name="Norbertczak H."/>
            <person name="Walker D."/>
            <person name="Simmonds M."/>
            <person name="White B."/>
            <person name="Bason N."/>
            <person name="Mungall K."/>
            <person name="Dougan G."/>
            <person name="Parkhill J."/>
        </authorList>
    </citation>
    <scope>NUCLEOTIDE SEQUENCE [LARGE SCALE GENOMIC DNA]</scope>
    <source>
        <strain>AKU_12601</strain>
    </source>
</reference>
<comment type="function">
    <text evidence="1">Specifically methylates the cytosine at position 967 (m5C967) of 16S rRNA.</text>
</comment>
<comment type="catalytic activity">
    <reaction evidence="1">
        <text>cytidine(967) in 16S rRNA + S-adenosyl-L-methionine = 5-methylcytidine(967) in 16S rRNA + S-adenosyl-L-homocysteine + H(+)</text>
        <dbReference type="Rhea" id="RHEA:42748"/>
        <dbReference type="Rhea" id="RHEA-COMP:10219"/>
        <dbReference type="Rhea" id="RHEA-COMP:10220"/>
        <dbReference type="ChEBI" id="CHEBI:15378"/>
        <dbReference type="ChEBI" id="CHEBI:57856"/>
        <dbReference type="ChEBI" id="CHEBI:59789"/>
        <dbReference type="ChEBI" id="CHEBI:74483"/>
        <dbReference type="ChEBI" id="CHEBI:82748"/>
        <dbReference type="EC" id="2.1.1.176"/>
    </reaction>
</comment>
<comment type="subcellular location">
    <subcellularLocation>
        <location evidence="1">Cytoplasm</location>
    </subcellularLocation>
</comment>
<comment type="similarity">
    <text evidence="1">Belongs to the class I-like SAM-binding methyltransferase superfamily. RsmB/NOP family.</text>
</comment>
<keyword id="KW-0963">Cytoplasm</keyword>
<keyword id="KW-0489">Methyltransferase</keyword>
<keyword id="KW-0694">RNA-binding</keyword>
<keyword id="KW-0698">rRNA processing</keyword>
<keyword id="KW-0949">S-adenosyl-L-methionine</keyword>
<keyword id="KW-0808">Transferase</keyword>
<accession>B5BGV5</accession>
<sequence length="429" mass="48144">MKKQNNLRSLAAQAVEQVVEQGQSLSNVLPPLQQKVADKDKALLQELCFGVLRTLSQLEWLINKLMSRPMTGKQRTVHYLIMVGFYQLLYTRVPPHAALAETVEGAVSIKRPQLKGLINGVLRQFQRQQETLLNEFATSDARFLHPGWLVKRLQNAYPTQWQRIIEANNQRPPMWLRVNRTHHTRDGWLGLLEDAGMKGYPHPDYPDAVRLETPAPVHALPGFAEGWVTVQDASAQGCAVFLAPQNGEHILDLCAAPGGKTTHILEVAPEADVLAVDIDEQRLSRVYDNLKRLGMKATVKQGDGRYPAQWCGEQQFDRILLDAPCSATGVIRRHPDIKWLRRDRDIAELAQLQAEILDTVWPRLKPGGTLVYATCSVLPEENRDQIKTFLQRTPDAALSETGTPDQPGQQNLPGGEEGDGFFYAKLIKK</sequence>
<evidence type="ECO:0000255" key="1">
    <source>
        <dbReference type="HAMAP-Rule" id="MF_01856"/>
    </source>
</evidence>
<evidence type="ECO:0000256" key="2">
    <source>
        <dbReference type="SAM" id="MobiDB-lite"/>
    </source>
</evidence>
<proteinExistence type="inferred from homology"/>
<protein>
    <recommendedName>
        <fullName evidence="1">Ribosomal RNA small subunit methyltransferase B</fullName>
        <ecNumber evidence="1">2.1.1.176</ecNumber>
    </recommendedName>
    <alternativeName>
        <fullName evidence="1">16S rRNA m5C967 methyltransferase</fullName>
    </alternativeName>
    <alternativeName>
        <fullName evidence="1">rRNA (cytosine-C(5)-)-methyltransferase RsmB</fullName>
    </alternativeName>
</protein>
<name>RSMB_SALPK</name>